<accession>Q62L74</accession>
<organism>
    <name type="scientific">Burkholderia mallei (strain ATCC 23344)</name>
    <dbReference type="NCBI Taxonomy" id="243160"/>
    <lineage>
        <taxon>Bacteria</taxon>
        <taxon>Pseudomonadati</taxon>
        <taxon>Pseudomonadota</taxon>
        <taxon>Betaproteobacteria</taxon>
        <taxon>Burkholderiales</taxon>
        <taxon>Burkholderiaceae</taxon>
        <taxon>Burkholderia</taxon>
        <taxon>pseudomallei group</taxon>
    </lineage>
</organism>
<sequence length="280" mass="31184">MAESHLDPSKLATGPAGFGAAAGQRPLAPLNAKIEVKNLNFFYNQFHALKNINLSIPEGKVTAFIGPSGCGKSTLLRTFNKMYALYPEQRAEGEIVMDGENLLQSKLDISLLRARIGMVFQKPTPFPMSIYDNIAFGVKMFERLTRSEMDDRVEWALTKAALWNEVKDKLSQSGYGLSGGQQQRLCIARGIAIRPEVLLLDEPCSALDPISTGRIEELIAELKSDYTVVIVTHNMQQAARCSDYTAYMYLGELIEFGETEKIFIKPARKETEDYITGRFG</sequence>
<protein>
    <recommendedName>
        <fullName evidence="1">Phosphate import ATP-binding protein PstB</fullName>
        <ecNumber evidence="1">7.3.2.1</ecNumber>
    </recommendedName>
    <alternativeName>
        <fullName evidence="1">ABC phosphate transporter</fullName>
    </alternativeName>
    <alternativeName>
        <fullName evidence="1">Phosphate-transporting ATPase</fullName>
    </alternativeName>
</protein>
<comment type="function">
    <text evidence="1">Part of the ABC transporter complex PstSACB involved in phosphate import. Responsible for energy coupling to the transport system.</text>
</comment>
<comment type="catalytic activity">
    <reaction evidence="1">
        <text>phosphate(out) + ATP + H2O = ADP + 2 phosphate(in) + H(+)</text>
        <dbReference type="Rhea" id="RHEA:24440"/>
        <dbReference type="ChEBI" id="CHEBI:15377"/>
        <dbReference type="ChEBI" id="CHEBI:15378"/>
        <dbReference type="ChEBI" id="CHEBI:30616"/>
        <dbReference type="ChEBI" id="CHEBI:43474"/>
        <dbReference type="ChEBI" id="CHEBI:456216"/>
        <dbReference type="EC" id="7.3.2.1"/>
    </reaction>
</comment>
<comment type="subunit">
    <text evidence="1">The complex is composed of two ATP-binding proteins (PstB), two transmembrane proteins (PstC and PstA) and a solute-binding protein (PstS).</text>
</comment>
<comment type="subcellular location">
    <subcellularLocation>
        <location evidence="1">Cell inner membrane</location>
        <topology evidence="1">Peripheral membrane protein</topology>
    </subcellularLocation>
</comment>
<comment type="similarity">
    <text evidence="1">Belongs to the ABC transporter superfamily. Phosphate importer (TC 3.A.1.7) family.</text>
</comment>
<dbReference type="EC" id="7.3.2.1" evidence="1"/>
<dbReference type="EMBL" id="CP000010">
    <property type="protein sequence ID" value="AAU49548.1"/>
    <property type="molecule type" value="Genomic_DNA"/>
</dbReference>
<dbReference type="RefSeq" id="YP_102545.1">
    <property type="nucleotide sequence ID" value="NC_006348.1"/>
</dbReference>
<dbReference type="SMR" id="Q62L74"/>
<dbReference type="KEGG" id="bma:BMA0783"/>
<dbReference type="PATRIC" id="fig|243160.12.peg.806"/>
<dbReference type="eggNOG" id="COG1117">
    <property type="taxonomic scope" value="Bacteria"/>
</dbReference>
<dbReference type="HOGENOM" id="CLU_000604_1_22_4"/>
<dbReference type="Proteomes" id="UP000006693">
    <property type="component" value="Chromosome 1"/>
</dbReference>
<dbReference type="GO" id="GO:0005886">
    <property type="term" value="C:plasma membrane"/>
    <property type="evidence" value="ECO:0007669"/>
    <property type="project" value="UniProtKB-SubCell"/>
</dbReference>
<dbReference type="GO" id="GO:0005524">
    <property type="term" value="F:ATP binding"/>
    <property type="evidence" value="ECO:0007669"/>
    <property type="project" value="UniProtKB-KW"/>
</dbReference>
<dbReference type="GO" id="GO:0016887">
    <property type="term" value="F:ATP hydrolysis activity"/>
    <property type="evidence" value="ECO:0007669"/>
    <property type="project" value="InterPro"/>
</dbReference>
<dbReference type="GO" id="GO:0015415">
    <property type="term" value="F:ATPase-coupled phosphate ion transmembrane transporter activity"/>
    <property type="evidence" value="ECO:0007669"/>
    <property type="project" value="UniProtKB-EC"/>
</dbReference>
<dbReference type="GO" id="GO:0035435">
    <property type="term" value="P:phosphate ion transmembrane transport"/>
    <property type="evidence" value="ECO:0007669"/>
    <property type="project" value="InterPro"/>
</dbReference>
<dbReference type="CDD" id="cd03260">
    <property type="entry name" value="ABC_PstB_phosphate_transporter"/>
    <property type="match status" value="1"/>
</dbReference>
<dbReference type="FunFam" id="3.40.50.300:FF:000132">
    <property type="entry name" value="Phosphate import ATP-binding protein PstB"/>
    <property type="match status" value="1"/>
</dbReference>
<dbReference type="Gene3D" id="3.40.50.300">
    <property type="entry name" value="P-loop containing nucleotide triphosphate hydrolases"/>
    <property type="match status" value="1"/>
</dbReference>
<dbReference type="InterPro" id="IPR003593">
    <property type="entry name" value="AAA+_ATPase"/>
</dbReference>
<dbReference type="InterPro" id="IPR003439">
    <property type="entry name" value="ABC_transporter-like_ATP-bd"/>
</dbReference>
<dbReference type="InterPro" id="IPR017871">
    <property type="entry name" value="ABC_transporter-like_CS"/>
</dbReference>
<dbReference type="InterPro" id="IPR027417">
    <property type="entry name" value="P-loop_NTPase"/>
</dbReference>
<dbReference type="InterPro" id="IPR005670">
    <property type="entry name" value="PstB-like"/>
</dbReference>
<dbReference type="NCBIfam" id="TIGR00972">
    <property type="entry name" value="3a0107s01c2"/>
    <property type="match status" value="1"/>
</dbReference>
<dbReference type="PANTHER" id="PTHR43423">
    <property type="entry name" value="ABC TRANSPORTER I FAMILY MEMBER 17"/>
    <property type="match status" value="1"/>
</dbReference>
<dbReference type="PANTHER" id="PTHR43423:SF3">
    <property type="entry name" value="PHOSPHATE IMPORT ATP-BINDING PROTEIN PSTB"/>
    <property type="match status" value="1"/>
</dbReference>
<dbReference type="Pfam" id="PF00005">
    <property type="entry name" value="ABC_tran"/>
    <property type="match status" value="1"/>
</dbReference>
<dbReference type="SMART" id="SM00382">
    <property type="entry name" value="AAA"/>
    <property type="match status" value="1"/>
</dbReference>
<dbReference type="SUPFAM" id="SSF52540">
    <property type="entry name" value="P-loop containing nucleoside triphosphate hydrolases"/>
    <property type="match status" value="1"/>
</dbReference>
<dbReference type="PROSITE" id="PS00211">
    <property type="entry name" value="ABC_TRANSPORTER_1"/>
    <property type="match status" value="1"/>
</dbReference>
<dbReference type="PROSITE" id="PS50893">
    <property type="entry name" value="ABC_TRANSPORTER_2"/>
    <property type="match status" value="1"/>
</dbReference>
<dbReference type="PROSITE" id="PS51238">
    <property type="entry name" value="PSTB"/>
    <property type="match status" value="1"/>
</dbReference>
<reference key="1">
    <citation type="journal article" date="2004" name="Proc. Natl. Acad. Sci. U.S.A.">
        <title>Structural flexibility in the Burkholderia mallei genome.</title>
        <authorList>
            <person name="Nierman W.C."/>
            <person name="DeShazer D."/>
            <person name="Kim H.S."/>
            <person name="Tettelin H."/>
            <person name="Nelson K.E."/>
            <person name="Feldblyum T.V."/>
            <person name="Ulrich R.L."/>
            <person name="Ronning C.M."/>
            <person name="Brinkac L.M."/>
            <person name="Daugherty S.C."/>
            <person name="Davidsen T.D."/>
            <person name="DeBoy R.T."/>
            <person name="Dimitrov G."/>
            <person name="Dodson R.J."/>
            <person name="Durkin A.S."/>
            <person name="Gwinn M.L."/>
            <person name="Haft D.H."/>
            <person name="Khouri H.M."/>
            <person name="Kolonay J.F."/>
            <person name="Madupu R."/>
            <person name="Mohammoud Y."/>
            <person name="Nelson W.C."/>
            <person name="Radune D."/>
            <person name="Romero C.M."/>
            <person name="Sarria S."/>
            <person name="Selengut J."/>
            <person name="Shamblin C."/>
            <person name="Sullivan S.A."/>
            <person name="White O."/>
            <person name="Yu Y."/>
            <person name="Zafar N."/>
            <person name="Zhou L."/>
            <person name="Fraser C.M."/>
        </authorList>
    </citation>
    <scope>NUCLEOTIDE SEQUENCE [LARGE SCALE GENOMIC DNA]</scope>
    <source>
        <strain>ATCC 23344</strain>
    </source>
</reference>
<gene>
    <name evidence="1" type="primary">pstB</name>
    <name type="ordered locus">BMA0783</name>
</gene>
<proteinExistence type="inferred from homology"/>
<name>PSTB_BURMA</name>
<evidence type="ECO:0000255" key="1">
    <source>
        <dbReference type="HAMAP-Rule" id="MF_01702"/>
    </source>
</evidence>
<keyword id="KW-0067">ATP-binding</keyword>
<keyword id="KW-0997">Cell inner membrane</keyword>
<keyword id="KW-1003">Cell membrane</keyword>
<keyword id="KW-0472">Membrane</keyword>
<keyword id="KW-0547">Nucleotide-binding</keyword>
<keyword id="KW-0592">Phosphate transport</keyword>
<keyword id="KW-1185">Reference proteome</keyword>
<keyword id="KW-1278">Translocase</keyword>
<keyword id="KW-0813">Transport</keyword>
<feature type="chain" id="PRO_0000092795" description="Phosphate import ATP-binding protein PstB">
    <location>
        <begin position="1"/>
        <end position="280"/>
    </location>
</feature>
<feature type="domain" description="ABC transporter" evidence="1">
    <location>
        <begin position="34"/>
        <end position="275"/>
    </location>
</feature>
<feature type="binding site" evidence="1">
    <location>
        <begin position="66"/>
        <end position="73"/>
    </location>
    <ligand>
        <name>ATP</name>
        <dbReference type="ChEBI" id="CHEBI:30616"/>
    </ligand>
</feature>